<accession>Q03735</accession>
<accession>D6W0G7</accession>
<evidence type="ECO:0000255" key="1">
    <source>
        <dbReference type="PROSITE-ProRule" id="PRU00176"/>
    </source>
</evidence>
<evidence type="ECO:0000256" key="2">
    <source>
        <dbReference type="SAM" id="MobiDB-lite"/>
    </source>
</evidence>
<evidence type="ECO:0000269" key="3">
    <source>
    </source>
</evidence>
<evidence type="ECO:0000269" key="4">
    <source>
    </source>
</evidence>
<evidence type="ECO:0000269" key="5">
    <source>
    </source>
</evidence>
<evidence type="ECO:0000269" key="6">
    <source>
    </source>
</evidence>
<evidence type="ECO:0007744" key="7">
    <source>
    </source>
</evidence>
<evidence type="ECO:0007744" key="8">
    <source>
    </source>
</evidence>
<evidence type="ECO:0007744" key="9">
    <source>
    </source>
</evidence>
<organism>
    <name type="scientific">Saccharomyces cerevisiae (strain ATCC 204508 / S288c)</name>
    <name type="common">Baker's yeast</name>
    <dbReference type="NCBI Taxonomy" id="559292"/>
    <lineage>
        <taxon>Eukaryota</taxon>
        <taxon>Fungi</taxon>
        <taxon>Dikarya</taxon>
        <taxon>Ascomycota</taxon>
        <taxon>Saccharomycotina</taxon>
        <taxon>Saccharomycetes</taxon>
        <taxon>Saccharomycetales</taxon>
        <taxon>Saccharomycetaceae</taxon>
        <taxon>Saccharomyces</taxon>
    </lineage>
</organism>
<gene>
    <name type="primary">NAB6</name>
    <name type="ordered locus">YML117W</name>
    <name type="ORF">YM8339.02</name>
</gene>
<comment type="function">
    <text evidence="6">RNA-binding protein that associates with mRNAs encoding cell wall proteins.</text>
</comment>
<comment type="interaction">
    <interactant intactId="EBI-27955">
        <id>Q03735</id>
    </interactant>
    <interactant intactId="EBI-12917">
        <id>P29468</id>
        <label>PAP1</label>
    </interactant>
    <organismsDiffer>false</organismsDiffer>
    <experiments>3</experiments>
</comment>
<comment type="subcellular location">
    <subcellularLocation>
        <location evidence="3">Cytoplasm</location>
    </subcellularLocation>
</comment>
<comment type="induction">
    <text evidence="5">Expression down-regulated by cAMP.</text>
</comment>
<comment type="disruption phenotype">
    <text evidence="5">Displays increased sensitivity to some cell wall disrupting agents including sodium dodecyl sulfate (SDS) and calcofluor white (CFW).</text>
</comment>
<comment type="miscellaneous">
    <text evidence="4">Present with 1540 molecules/cell in log phase SD medium.</text>
</comment>
<name>NAB6_YEAST</name>
<protein>
    <recommendedName>
        <fullName>RNA-binding protein NAB6</fullName>
    </recommendedName>
    <alternativeName>
        <fullName>Nucleic acid-binding protein 6</fullName>
    </alternativeName>
</protein>
<keyword id="KW-0007">Acetylation</keyword>
<keyword id="KW-0963">Cytoplasm</keyword>
<keyword id="KW-0597">Phosphoprotein</keyword>
<keyword id="KW-1185">Reference proteome</keyword>
<keyword id="KW-0694">RNA-binding</keyword>
<sequence>MSNSNSKKPVANYAYRQQQDYNGMNAMVGNPMMYHPVDFVNGAGQYGPSQHPAYYTNSPLPNIPPTPFDTAYGASLFPSHLLMGSPFVSSPNMQSGYNSARSSNLKRKAYSRPVSNHNGYNGNSNSNQNNTNNGMVTPSNYYRMGRNSFSRNNNSTRNVTHNNNKGCDTRNNSGRRTFARNNIFDDILPEMLLQRPFCINYKVLPTGDDAYRTRSLLIENVDHSIDLHSIVKNFVKSNTLESAYLIEGGKSDDSKDVETKNLSILISFLTKGDCLNFYNNILQRLSEFKTFLKSEALNLKFVCLNYDPKCLPTFIESEALTENAEEADITNGSTMISASLHHNIANKDATRSIIIEFKSPVEKSDLFKKKLQFLDRSKNKRYILESIDLVNTDVPSNQFPENYAVLTFLNISMAIEVLDYLKKYSKNLGISKCFYVSLAPLVVSSARSSVANIYEGKTSTHRLSVPSVTAGNNNDSNNNGNNNKSNMSGITTLNNNSSIGVSVYGHSNMSLTSLSSSVSLNEEIDMLATKLQGVELDGTYLEINYRDYQTPTIEEHSTHLSNVKISKTTENSRQFSQDIPSPLPLNEHMFMNDSNQSNGAIIPQQLIATPSPVSPNLQMNQRVLPNPITQSLEQNFNVSAKVASSMGSDIGNRTIYIGNINPRSKAEDICNVVRGGILQSIKYIPEKKICFVTFIEAPSAVQFYANSFIDPIVLHGNMLRVGWGHYSGPLPKLISLAVTIGASRNVYVSLPEFAFKEKFIHDPQYKKLHETLSLPDAEQLREDFSTYGDIEQINYLSDSHCCWINFMNISSAISLVEEMNKESTVQNESGEVTLKRATEEKFGGRYKGLLINYGKDRCGNINKNLIAGKNSRFYKKVKRPSYNIRLSKLEEKRRQNEIDEKEKAFDKPLNLESLGISLDAHKDNGGGETGTANNTGHENESELEAENENGNETGSFGGLGLAVASSDVKRATSDETDYEDIFNKSSGSSDSSSDVEVIMHSPSDPEYALKSQTLRSSSQTVINSKRPVKIEDEEEAVGMSQLNYRSSLRQAPPRAPSTLSYNHSKNNETPMQDIFTNGETANNRKKKRGSFARHRTIPGSDVMAQYLAQVQHSTFMYAANILGASAEDNTHPDE</sequence>
<proteinExistence type="evidence at protein level"/>
<feature type="initiator methionine" description="Removed" evidence="9">
    <location>
        <position position="1"/>
    </location>
</feature>
<feature type="chain" id="PRO_0000082034" description="RNA-binding protein NAB6">
    <location>
        <begin position="2"/>
        <end position="1134"/>
    </location>
</feature>
<feature type="domain" description="RRM" evidence="1">
    <location>
        <begin position="653"/>
        <end position="726"/>
    </location>
</feature>
<feature type="region of interest" description="Disordered" evidence="2">
    <location>
        <begin position="112"/>
        <end position="133"/>
    </location>
</feature>
<feature type="region of interest" description="Disordered" evidence="2">
    <location>
        <begin position="151"/>
        <end position="173"/>
    </location>
</feature>
<feature type="region of interest" description="Disordered" evidence="2">
    <location>
        <begin position="464"/>
        <end position="491"/>
    </location>
</feature>
<feature type="region of interest" description="Disordered" evidence="2">
    <location>
        <begin position="918"/>
        <end position="959"/>
    </location>
</feature>
<feature type="region of interest" description="Disordered" evidence="2">
    <location>
        <begin position="1043"/>
        <end position="1092"/>
    </location>
</feature>
<feature type="compositionally biased region" description="Low complexity" evidence="2">
    <location>
        <begin position="115"/>
        <end position="133"/>
    </location>
</feature>
<feature type="compositionally biased region" description="Low complexity" evidence="2">
    <location>
        <begin position="151"/>
        <end position="164"/>
    </location>
</feature>
<feature type="compositionally biased region" description="Low complexity" evidence="2">
    <location>
        <begin position="471"/>
        <end position="489"/>
    </location>
</feature>
<feature type="compositionally biased region" description="Polar residues" evidence="2">
    <location>
        <begin position="1057"/>
        <end position="1081"/>
    </location>
</feature>
<feature type="compositionally biased region" description="Basic residues" evidence="2">
    <location>
        <begin position="1083"/>
        <end position="1092"/>
    </location>
</feature>
<feature type="modified residue" description="N-acetylserine" evidence="9">
    <location>
        <position position="2"/>
    </location>
</feature>
<feature type="modified residue" description="Phosphoserine" evidence="8">
    <location>
        <position position="464"/>
    </location>
</feature>
<feature type="modified residue" description="Phosphoserine" evidence="7">
    <location>
        <position position="467"/>
    </location>
</feature>
<dbReference type="EMBL" id="Z49210">
    <property type="protein sequence ID" value="CAA89101.1"/>
    <property type="molecule type" value="Genomic_DNA"/>
</dbReference>
<dbReference type="EMBL" id="BK006946">
    <property type="protein sequence ID" value="DAA09781.1"/>
    <property type="molecule type" value="Genomic_DNA"/>
</dbReference>
<dbReference type="PIR" id="S53955">
    <property type="entry name" value="S53955"/>
</dbReference>
<dbReference type="RefSeq" id="NP_013589.1">
    <property type="nucleotide sequence ID" value="NM_001182479.1"/>
</dbReference>
<dbReference type="SMR" id="Q03735"/>
<dbReference type="BioGRID" id="35087">
    <property type="interactions" value="199"/>
</dbReference>
<dbReference type="DIP" id="DIP-2976N"/>
<dbReference type="FunCoup" id="Q03735">
    <property type="interactions" value="299"/>
</dbReference>
<dbReference type="IntAct" id="Q03735">
    <property type="interactions" value="25"/>
</dbReference>
<dbReference type="MINT" id="Q03735"/>
<dbReference type="STRING" id="4932.YML117W"/>
<dbReference type="GlyGen" id="Q03735">
    <property type="glycosylation" value="2 sites, 1 O-linked glycan (1 site)"/>
</dbReference>
<dbReference type="iPTMnet" id="Q03735"/>
<dbReference type="PaxDb" id="4932-YML117W"/>
<dbReference type="PeptideAtlas" id="Q03735"/>
<dbReference type="EnsemblFungi" id="YML117W_mRNA">
    <property type="protein sequence ID" value="YML117W"/>
    <property type="gene ID" value="YML117W"/>
</dbReference>
<dbReference type="GeneID" id="854922"/>
<dbReference type="KEGG" id="sce:YML117W"/>
<dbReference type="AGR" id="SGD:S000004585"/>
<dbReference type="SGD" id="S000004585">
    <property type="gene designation" value="NAB6"/>
</dbReference>
<dbReference type="VEuPathDB" id="FungiDB:YML117W"/>
<dbReference type="eggNOG" id="KOG0118">
    <property type="taxonomic scope" value="Eukaryota"/>
</dbReference>
<dbReference type="GeneTree" id="ENSGT00390000002792"/>
<dbReference type="HOGENOM" id="CLU_276472_0_0_1"/>
<dbReference type="InParanoid" id="Q03735"/>
<dbReference type="OMA" id="SDVMAQY"/>
<dbReference type="OrthoDB" id="6407164at2759"/>
<dbReference type="BioCyc" id="YEAST:G3O-32698-MONOMER"/>
<dbReference type="BioGRID-ORCS" id="854922">
    <property type="hits" value="0 hits in 10 CRISPR screens"/>
</dbReference>
<dbReference type="CD-CODE" id="E03F929F">
    <property type="entry name" value="Stress granule"/>
</dbReference>
<dbReference type="PRO" id="PR:Q03735"/>
<dbReference type="Proteomes" id="UP000002311">
    <property type="component" value="Chromosome XIII"/>
</dbReference>
<dbReference type="RNAct" id="Q03735">
    <property type="molecule type" value="protein"/>
</dbReference>
<dbReference type="GO" id="GO:0005737">
    <property type="term" value="C:cytoplasm"/>
    <property type="evidence" value="ECO:0007005"/>
    <property type="project" value="SGD"/>
</dbReference>
<dbReference type="GO" id="GO:0010494">
    <property type="term" value="C:cytoplasmic stress granule"/>
    <property type="evidence" value="ECO:0000314"/>
    <property type="project" value="SGD"/>
</dbReference>
<dbReference type="GO" id="GO:0003730">
    <property type="term" value="F:mRNA 3'-UTR binding"/>
    <property type="evidence" value="ECO:0000314"/>
    <property type="project" value="SGD"/>
</dbReference>
<dbReference type="GO" id="GO:0003729">
    <property type="term" value="F:mRNA binding"/>
    <property type="evidence" value="ECO:0007005"/>
    <property type="project" value="SGD"/>
</dbReference>
<dbReference type="GO" id="GO:0070935">
    <property type="term" value="P:3'-UTR-mediated mRNA stabilization"/>
    <property type="evidence" value="ECO:0000315"/>
    <property type="project" value="SGD"/>
</dbReference>
<dbReference type="GO" id="GO:1990394">
    <property type="term" value="P:cellular response to cell wall damage"/>
    <property type="evidence" value="ECO:0000315"/>
    <property type="project" value="SGD"/>
</dbReference>
<dbReference type="CDD" id="cd12521">
    <property type="entry name" value="RRM3_MRN1"/>
    <property type="match status" value="1"/>
</dbReference>
<dbReference type="FunFam" id="3.30.70.330:FF:000836">
    <property type="entry name" value="Nab6p"/>
    <property type="match status" value="1"/>
</dbReference>
<dbReference type="FunFam" id="3.30.70.330:FF:000400">
    <property type="entry name" value="Negative regulator of differentiation 1"/>
    <property type="match status" value="1"/>
</dbReference>
<dbReference type="Gene3D" id="3.30.70.330">
    <property type="match status" value="2"/>
</dbReference>
<dbReference type="InterPro" id="IPR039171">
    <property type="entry name" value="Cwc2/Slt11"/>
</dbReference>
<dbReference type="InterPro" id="IPR018885">
    <property type="entry name" value="mRNA-bd_dom"/>
</dbReference>
<dbReference type="InterPro" id="IPR012677">
    <property type="entry name" value="Nucleotide-bd_a/b_plait_sf"/>
</dbReference>
<dbReference type="InterPro" id="IPR035979">
    <property type="entry name" value="RBD_domain_sf"/>
</dbReference>
<dbReference type="InterPro" id="IPR018835">
    <property type="entry name" value="RNA-binding_domain_put"/>
</dbReference>
<dbReference type="InterPro" id="IPR000504">
    <property type="entry name" value="RRM_dom"/>
</dbReference>
<dbReference type="PANTHER" id="PTHR14089">
    <property type="entry name" value="PRE-MRNA-SPLICING FACTOR RBM22"/>
    <property type="match status" value="1"/>
</dbReference>
<dbReference type="PANTHER" id="PTHR14089:SF10">
    <property type="entry name" value="RNA-BINDING PROTEIN NAB6"/>
    <property type="match status" value="1"/>
</dbReference>
<dbReference type="Pfam" id="PF10567">
    <property type="entry name" value="Nab6_mRNP_bdg"/>
    <property type="match status" value="1"/>
</dbReference>
<dbReference type="Pfam" id="PF10378">
    <property type="entry name" value="RRM"/>
    <property type="match status" value="1"/>
</dbReference>
<dbReference type="SMART" id="SM00360">
    <property type="entry name" value="RRM"/>
    <property type="match status" value="2"/>
</dbReference>
<dbReference type="SUPFAM" id="SSF54928">
    <property type="entry name" value="RNA-binding domain, RBD"/>
    <property type="match status" value="1"/>
</dbReference>
<dbReference type="PROSITE" id="PS50102">
    <property type="entry name" value="RRM"/>
    <property type="match status" value="1"/>
</dbReference>
<reference key="1">
    <citation type="journal article" date="1997" name="Nature">
        <title>The nucleotide sequence of Saccharomyces cerevisiae chromosome XIII.</title>
        <authorList>
            <person name="Bowman S."/>
            <person name="Churcher C.M."/>
            <person name="Badcock K."/>
            <person name="Brown D."/>
            <person name="Chillingworth T."/>
            <person name="Connor R."/>
            <person name="Dedman K."/>
            <person name="Devlin K."/>
            <person name="Gentles S."/>
            <person name="Hamlin N."/>
            <person name="Hunt S."/>
            <person name="Jagels K."/>
            <person name="Lye G."/>
            <person name="Moule S."/>
            <person name="Odell C."/>
            <person name="Pearson D."/>
            <person name="Rajandream M.A."/>
            <person name="Rice P."/>
            <person name="Skelton J."/>
            <person name="Walsh S.V."/>
            <person name="Whitehead S."/>
            <person name="Barrell B.G."/>
        </authorList>
    </citation>
    <scope>NUCLEOTIDE SEQUENCE [LARGE SCALE GENOMIC DNA]</scope>
    <source>
        <strain>ATCC 204508 / S288c</strain>
    </source>
</reference>
<reference key="2">
    <citation type="journal article" date="2014" name="G3 (Bethesda)">
        <title>The reference genome sequence of Saccharomyces cerevisiae: Then and now.</title>
        <authorList>
            <person name="Engel S.R."/>
            <person name="Dietrich F.S."/>
            <person name="Fisk D.G."/>
            <person name="Binkley G."/>
            <person name="Balakrishnan R."/>
            <person name="Costanzo M.C."/>
            <person name="Dwight S.S."/>
            <person name="Hitz B.C."/>
            <person name="Karra K."/>
            <person name="Nash R.S."/>
            <person name="Weng S."/>
            <person name="Wong E.D."/>
            <person name="Lloyd P."/>
            <person name="Skrzypek M.S."/>
            <person name="Miyasato S.R."/>
            <person name="Simison M."/>
            <person name="Cherry J.M."/>
        </authorList>
    </citation>
    <scope>GENOME REANNOTATION</scope>
    <source>
        <strain>ATCC 204508 / S288c</strain>
    </source>
</reference>
<reference key="3">
    <citation type="journal article" date="2003" name="Nature">
        <title>Global analysis of protein localization in budding yeast.</title>
        <authorList>
            <person name="Huh W.-K."/>
            <person name="Falvo J.V."/>
            <person name="Gerke L.C."/>
            <person name="Carroll A.S."/>
            <person name="Howson R.W."/>
            <person name="Weissman J.S."/>
            <person name="O'Shea E.K."/>
        </authorList>
    </citation>
    <scope>SUBCELLULAR LOCATION [LARGE SCALE ANALYSIS]</scope>
</reference>
<reference key="4">
    <citation type="journal article" date="2003" name="Nature">
        <title>Global analysis of protein expression in yeast.</title>
        <authorList>
            <person name="Ghaemmaghami S."/>
            <person name="Huh W.-K."/>
            <person name="Bower K."/>
            <person name="Howson R.W."/>
            <person name="Belle A."/>
            <person name="Dephoure N."/>
            <person name="O'Shea E.K."/>
            <person name="Weissman J.S."/>
        </authorList>
    </citation>
    <scope>LEVEL OF PROTEIN EXPRESSION [LARGE SCALE ANALYSIS]</scope>
</reference>
<reference key="5">
    <citation type="journal article" date="2003" name="Physiol. Genomics">
        <title>Transcriptome profiling of a Saccharomyces cerevisiae mutant with a constitutively activated Ras/cAMP pathway.</title>
        <authorList>
            <person name="Jones D.L."/>
            <person name="Petty J."/>
            <person name="Hoyle D.C."/>
            <person name="Hayes A."/>
            <person name="Ragni E."/>
            <person name="Popolo L."/>
            <person name="Oliver S.G."/>
            <person name="Stateva L.I."/>
        </authorList>
    </citation>
    <scope>INDUCTION</scope>
    <scope>DISRUPTION PHENOTYPE</scope>
</reference>
<reference key="6">
    <citation type="journal article" date="2007" name="J. Proteome Res.">
        <title>Large-scale phosphorylation analysis of alpha-factor-arrested Saccharomyces cerevisiae.</title>
        <authorList>
            <person name="Li X."/>
            <person name="Gerber S.A."/>
            <person name="Rudner A.D."/>
            <person name="Beausoleil S.A."/>
            <person name="Haas W."/>
            <person name="Villen J."/>
            <person name="Elias J.E."/>
            <person name="Gygi S.P."/>
        </authorList>
    </citation>
    <scope>IDENTIFICATION BY MASS SPECTROMETRY [LARGE SCALE ANALYSIS]</scope>
    <source>
        <strain>ADR376</strain>
    </source>
</reference>
<reference key="7">
    <citation type="journal article" date="2008" name="Mol. Cell. Proteomics">
        <title>A multidimensional chromatography technology for in-depth phosphoproteome analysis.</title>
        <authorList>
            <person name="Albuquerque C.P."/>
            <person name="Smolka M.B."/>
            <person name="Payne S.H."/>
            <person name="Bafna V."/>
            <person name="Eng J."/>
            <person name="Zhou H."/>
        </authorList>
    </citation>
    <scope>PHOSPHORYLATION [LARGE SCALE ANALYSIS] AT SER-467</scope>
    <scope>IDENTIFICATION BY MASS SPECTROMETRY [LARGE SCALE ANALYSIS]</scope>
</reference>
<reference key="8">
    <citation type="journal article" date="2008" name="PLoS Biol.">
        <title>Diverse RNA-binding proteins interact with functionally related sets of RNAs, suggesting an extensive regulatory system.</title>
        <authorList>
            <person name="Hogan D.J."/>
            <person name="Riordan D.P."/>
            <person name="Gerber A.P."/>
            <person name="Herschlag D."/>
            <person name="Brown P.O."/>
        </authorList>
    </citation>
    <scope>FUNCTION</scope>
</reference>
<reference key="9">
    <citation type="journal article" date="2009" name="Science">
        <title>Global analysis of Cdk1 substrate phosphorylation sites provides insights into evolution.</title>
        <authorList>
            <person name="Holt L.J."/>
            <person name="Tuch B.B."/>
            <person name="Villen J."/>
            <person name="Johnson A.D."/>
            <person name="Gygi S.P."/>
            <person name="Morgan D.O."/>
        </authorList>
    </citation>
    <scope>PHOSPHORYLATION [LARGE SCALE ANALYSIS] AT SER-464</scope>
    <scope>IDENTIFICATION BY MASS SPECTROMETRY [LARGE SCALE ANALYSIS]</scope>
</reference>
<reference key="10">
    <citation type="journal article" date="2012" name="Proc. Natl. Acad. Sci. U.S.A.">
        <title>N-terminal acetylome analyses and functional insights of the N-terminal acetyltransferase NatB.</title>
        <authorList>
            <person name="Van Damme P."/>
            <person name="Lasa M."/>
            <person name="Polevoda B."/>
            <person name="Gazquez C."/>
            <person name="Elosegui-Artola A."/>
            <person name="Kim D.S."/>
            <person name="De Juan-Pardo E."/>
            <person name="Demeyer K."/>
            <person name="Hole K."/>
            <person name="Larrea E."/>
            <person name="Timmerman E."/>
            <person name="Prieto J."/>
            <person name="Arnesen T."/>
            <person name="Sherman F."/>
            <person name="Gevaert K."/>
            <person name="Aldabe R."/>
        </authorList>
    </citation>
    <scope>ACETYLATION [LARGE SCALE ANALYSIS] AT SER-2</scope>
    <scope>CLEAVAGE OF INITIATOR METHIONINE [LARGE SCALE ANALYSIS]</scope>
    <scope>IDENTIFICATION BY MASS SPECTROMETRY [LARGE SCALE ANALYSIS]</scope>
</reference>